<evidence type="ECO:0000255" key="1">
    <source>
        <dbReference type="HAMAP-Rule" id="MF_00736"/>
    </source>
</evidence>
<evidence type="ECO:0000305" key="2"/>
<proteinExistence type="inferred from homology"/>
<name>RL11_NOCFA</name>
<comment type="function">
    <text evidence="1">Forms part of the ribosomal stalk which helps the ribosome interact with GTP-bound translation factors.</text>
</comment>
<comment type="subunit">
    <text evidence="1">Part of the ribosomal stalk of the 50S ribosomal subunit. Interacts with L10 and the large rRNA to form the base of the stalk. L10 forms an elongated spine to which L12 dimers bind in a sequential fashion forming a multimeric L10(L12)X complex.</text>
</comment>
<comment type="PTM">
    <text evidence="1">One or more lysine residues are methylated.</text>
</comment>
<comment type="similarity">
    <text evidence="1">Belongs to the universal ribosomal protein uL11 family.</text>
</comment>
<sequence length="144" mass="15430">MPPKKKKLAGIIKLQIQAGQANPAPPVGPALGQHGVNIMEFCKAYNAATESQRGNVIPVEISVYEDRTFDFKLKTPPAAKLLLKAAGVQKGSAEPHRNKVAKVTMDQVREIAKTKMEDLNANDIDQAAKIIAGTARSMGITVEA</sequence>
<protein>
    <recommendedName>
        <fullName evidence="1">Large ribosomal subunit protein uL11</fullName>
    </recommendedName>
    <alternativeName>
        <fullName evidence="2">50S ribosomal protein L11</fullName>
    </alternativeName>
</protein>
<gene>
    <name evidence="1" type="primary">rplK</name>
    <name type="ordered locus">NFA_51150</name>
</gene>
<accession>Q5YPC4</accession>
<dbReference type="EMBL" id="AP006618">
    <property type="protein sequence ID" value="BAD59967.1"/>
    <property type="molecule type" value="Genomic_DNA"/>
</dbReference>
<dbReference type="RefSeq" id="WP_011211649.1">
    <property type="nucleotide sequence ID" value="NC_006361.1"/>
</dbReference>
<dbReference type="SMR" id="Q5YPC4"/>
<dbReference type="STRING" id="247156.NFA_51150"/>
<dbReference type="GeneID" id="61135689"/>
<dbReference type="KEGG" id="nfa:NFA_51150"/>
<dbReference type="eggNOG" id="COG0080">
    <property type="taxonomic scope" value="Bacteria"/>
</dbReference>
<dbReference type="HOGENOM" id="CLU_074237_2_1_11"/>
<dbReference type="OrthoDB" id="9802408at2"/>
<dbReference type="Proteomes" id="UP000006820">
    <property type="component" value="Chromosome"/>
</dbReference>
<dbReference type="GO" id="GO:0022625">
    <property type="term" value="C:cytosolic large ribosomal subunit"/>
    <property type="evidence" value="ECO:0007669"/>
    <property type="project" value="TreeGrafter"/>
</dbReference>
<dbReference type="GO" id="GO:0070180">
    <property type="term" value="F:large ribosomal subunit rRNA binding"/>
    <property type="evidence" value="ECO:0007669"/>
    <property type="project" value="UniProtKB-UniRule"/>
</dbReference>
<dbReference type="GO" id="GO:0003735">
    <property type="term" value="F:structural constituent of ribosome"/>
    <property type="evidence" value="ECO:0007669"/>
    <property type="project" value="InterPro"/>
</dbReference>
<dbReference type="GO" id="GO:0006412">
    <property type="term" value="P:translation"/>
    <property type="evidence" value="ECO:0007669"/>
    <property type="project" value="UniProtKB-UniRule"/>
</dbReference>
<dbReference type="CDD" id="cd00349">
    <property type="entry name" value="Ribosomal_L11"/>
    <property type="match status" value="1"/>
</dbReference>
<dbReference type="FunFam" id="1.10.10.250:FF:000001">
    <property type="entry name" value="50S ribosomal protein L11"/>
    <property type="match status" value="1"/>
</dbReference>
<dbReference type="FunFam" id="3.30.1550.10:FF:000001">
    <property type="entry name" value="50S ribosomal protein L11"/>
    <property type="match status" value="1"/>
</dbReference>
<dbReference type="Gene3D" id="1.10.10.250">
    <property type="entry name" value="Ribosomal protein L11, C-terminal domain"/>
    <property type="match status" value="1"/>
</dbReference>
<dbReference type="Gene3D" id="3.30.1550.10">
    <property type="entry name" value="Ribosomal protein L11/L12, N-terminal domain"/>
    <property type="match status" value="1"/>
</dbReference>
<dbReference type="HAMAP" id="MF_00736">
    <property type="entry name" value="Ribosomal_uL11"/>
    <property type="match status" value="1"/>
</dbReference>
<dbReference type="InterPro" id="IPR000911">
    <property type="entry name" value="Ribosomal_uL11"/>
</dbReference>
<dbReference type="InterPro" id="IPR006519">
    <property type="entry name" value="Ribosomal_uL11_bac-typ"/>
</dbReference>
<dbReference type="InterPro" id="IPR020783">
    <property type="entry name" value="Ribosomal_uL11_C"/>
</dbReference>
<dbReference type="InterPro" id="IPR036769">
    <property type="entry name" value="Ribosomal_uL11_C_sf"/>
</dbReference>
<dbReference type="InterPro" id="IPR020785">
    <property type="entry name" value="Ribosomal_uL11_CS"/>
</dbReference>
<dbReference type="InterPro" id="IPR020784">
    <property type="entry name" value="Ribosomal_uL11_N"/>
</dbReference>
<dbReference type="InterPro" id="IPR036796">
    <property type="entry name" value="Ribosomal_uL11_N_sf"/>
</dbReference>
<dbReference type="NCBIfam" id="TIGR01632">
    <property type="entry name" value="L11_bact"/>
    <property type="match status" value="1"/>
</dbReference>
<dbReference type="PANTHER" id="PTHR11661">
    <property type="entry name" value="60S RIBOSOMAL PROTEIN L12"/>
    <property type="match status" value="1"/>
</dbReference>
<dbReference type="PANTHER" id="PTHR11661:SF1">
    <property type="entry name" value="LARGE RIBOSOMAL SUBUNIT PROTEIN UL11M"/>
    <property type="match status" value="1"/>
</dbReference>
<dbReference type="Pfam" id="PF00298">
    <property type="entry name" value="Ribosomal_L11"/>
    <property type="match status" value="1"/>
</dbReference>
<dbReference type="Pfam" id="PF03946">
    <property type="entry name" value="Ribosomal_L11_N"/>
    <property type="match status" value="1"/>
</dbReference>
<dbReference type="SMART" id="SM00649">
    <property type="entry name" value="RL11"/>
    <property type="match status" value="1"/>
</dbReference>
<dbReference type="SUPFAM" id="SSF54747">
    <property type="entry name" value="Ribosomal L11/L12e N-terminal domain"/>
    <property type="match status" value="1"/>
</dbReference>
<dbReference type="SUPFAM" id="SSF46906">
    <property type="entry name" value="Ribosomal protein L11, C-terminal domain"/>
    <property type="match status" value="1"/>
</dbReference>
<dbReference type="PROSITE" id="PS00359">
    <property type="entry name" value="RIBOSOMAL_L11"/>
    <property type="match status" value="1"/>
</dbReference>
<organism>
    <name type="scientific">Nocardia farcinica (strain IFM 10152)</name>
    <dbReference type="NCBI Taxonomy" id="247156"/>
    <lineage>
        <taxon>Bacteria</taxon>
        <taxon>Bacillati</taxon>
        <taxon>Actinomycetota</taxon>
        <taxon>Actinomycetes</taxon>
        <taxon>Mycobacteriales</taxon>
        <taxon>Nocardiaceae</taxon>
        <taxon>Nocardia</taxon>
    </lineage>
</organism>
<reference key="1">
    <citation type="journal article" date="2004" name="Proc. Natl. Acad. Sci. U.S.A.">
        <title>The complete genomic sequence of Nocardia farcinica IFM 10152.</title>
        <authorList>
            <person name="Ishikawa J."/>
            <person name="Yamashita A."/>
            <person name="Mikami Y."/>
            <person name="Hoshino Y."/>
            <person name="Kurita H."/>
            <person name="Hotta K."/>
            <person name="Shiba T."/>
            <person name="Hattori M."/>
        </authorList>
    </citation>
    <scope>NUCLEOTIDE SEQUENCE [LARGE SCALE GENOMIC DNA]</scope>
    <source>
        <strain>IFM 10152</strain>
    </source>
</reference>
<feature type="chain" id="PRO_0000104329" description="Large ribosomal subunit protein uL11">
    <location>
        <begin position="1"/>
        <end position="144"/>
    </location>
</feature>
<keyword id="KW-0488">Methylation</keyword>
<keyword id="KW-1185">Reference proteome</keyword>
<keyword id="KW-0687">Ribonucleoprotein</keyword>
<keyword id="KW-0689">Ribosomal protein</keyword>
<keyword id="KW-0694">RNA-binding</keyword>
<keyword id="KW-0699">rRNA-binding</keyword>